<name>HN1BA_DANRE</name>
<comment type="function">
    <text evidence="2 9">Transcription factor that binds to the inverted palindrome 5'-GTTAATNATTAAC-3' (By similarity). Required for induction of rhombomere r5/r6 gene expression in the hindbrain.</text>
</comment>
<comment type="subunit">
    <text evidence="2">Binds DNA as a dimer. Can form homodimer or heterodimer with HNF1-alpha (By similarity).</text>
</comment>
<comment type="subcellular location">
    <subcellularLocation>
        <location evidence="3">Nucleus</location>
    </subcellularLocation>
</comment>
<comment type="tissue specificity">
    <text evidence="8 9">During embryonic development, expressed dynamically in the developing hindbrain, kidney (pronephros), gut, liver and pancreas; expressed in both intermediate mesoderm (precursor to the kidney) and the caudal hindbrain (including rhombomeres r5 and r6) at 10 hpf with expression diminishing caudally by 14 hpf. Strongly expressed in adult kidney, gut, liver and swim bladder; weakly expressed in brain, eye, testis, ovary and heart.</text>
</comment>
<comment type="developmental stage">
    <text evidence="7 8">Expressed both maternally and zygotically. Significantly expressed after the onset of gastrulation and throughout embryonic development.</text>
</comment>
<comment type="similarity">
    <text evidence="10">Belongs to the HNF1 homeobox family.</text>
</comment>
<comment type="caution">
    <text evidence="10">It is uncertain whether Met-1 or Met-5 is the initiator.</text>
</comment>
<comment type="sequence caution" evidence="10">
    <conflict type="erroneous initiation">
        <sequence resource="EMBL-CDS" id="AAL30666"/>
    </conflict>
</comment>
<dbReference type="EMBL" id="AF244140">
    <property type="protein sequence ID" value="AAL48193.2"/>
    <property type="molecule type" value="mRNA"/>
</dbReference>
<dbReference type="EMBL" id="AY336602">
    <property type="protein sequence ID" value="AAR02405.1"/>
    <property type="molecule type" value="mRNA"/>
</dbReference>
<dbReference type="EMBL" id="AF430840">
    <property type="protein sequence ID" value="AAL30666.1"/>
    <property type="status" value="ALT_INIT"/>
    <property type="molecule type" value="mRNA"/>
</dbReference>
<dbReference type="EMBL" id="BC129147">
    <property type="protein sequence ID" value="AAI29148.1"/>
    <property type="molecule type" value="mRNA"/>
</dbReference>
<dbReference type="RefSeq" id="NP_571955.3">
    <property type="nucleotide sequence ID" value="NM_131880.3"/>
</dbReference>
<dbReference type="BMRB" id="A1L1N5"/>
<dbReference type="SMR" id="A1L1N5"/>
<dbReference type="BioGRID" id="657079">
    <property type="interactions" value="1"/>
</dbReference>
<dbReference type="FunCoup" id="A1L1N5">
    <property type="interactions" value="1473"/>
</dbReference>
<dbReference type="STRING" id="7955.ENSDARP00000119593"/>
<dbReference type="PaxDb" id="7955-ENSDARP00000119593"/>
<dbReference type="PeptideAtlas" id="A1L1N5"/>
<dbReference type="GeneID" id="792391"/>
<dbReference type="KEGG" id="dre:792391"/>
<dbReference type="AGR" id="ZFIN:ZDB-GENE-020104-1"/>
<dbReference type="CTD" id="792391"/>
<dbReference type="ZFIN" id="ZDB-GENE-020104-1">
    <property type="gene designation" value="hnf1ba"/>
</dbReference>
<dbReference type="eggNOG" id="ENOG502QRPW">
    <property type="taxonomic scope" value="Eukaryota"/>
</dbReference>
<dbReference type="InParanoid" id="A1L1N5"/>
<dbReference type="OrthoDB" id="10069265at2759"/>
<dbReference type="PhylomeDB" id="A1L1N5"/>
<dbReference type="TreeFam" id="TF320327"/>
<dbReference type="PRO" id="PR:A1L1N5"/>
<dbReference type="Proteomes" id="UP000000437">
    <property type="component" value="Alternate scaffold 15"/>
</dbReference>
<dbReference type="Proteomes" id="UP000000437">
    <property type="component" value="Chromosome 15"/>
</dbReference>
<dbReference type="GO" id="GO:0005634">
    <property type="term" value="C:nucleus"/>
    <property type="evidence" value="ECO:0000318"/>
    <property type="project" value="GO_Central"/>
</dbReference>
<dbReference type="GO" id="GO:0003677">
    <property type="term" value="F:DNA binding"/>
    <property type="evidence" value="ECO:0000250"/>
    <property type="project" value="ZFIN"/>
</dbReference>
<dbReference type="GO" id="GO:0003700">
    <property type="term" value="F:DNA-binding transcription factor activity"/>
    <property type="evidence" value="ECO:0000250"/>
    <property type="project" value="ZFIN"/>
</dbReference>
<dbReference type="GO" id="GO:0000981">
    <property type="term" value="F:DNA-binding transcription factor activity, RNA polymerase II-specific"/>
    <property type="evidence" value="ECO:0000318"/>
    <property type="project" value="GO_Central"/>
</dbReference>
<dbReference type="GO" id="GO:0046983">
    <property type="term" value="F:protein dimerization activity"/>
    <property type="evidence" value="ECO:0000250"/>
    <property type="project" value="ZFIN"/>
</dbReference>
<dbReference type="GO" id="GO:0000978">
    <property type="term" value="F:RNA polymerase II cis-regulatory region sequence-specific DNA binding"/>
    <property type="evidence" value="ECO:0000318"/>
    <property type="project" value="GO_Central"/>
</dbReference>
<dbReference type="GO" id="GO:0009952">
    <property type="term" value="P:anterior/posterior pattern specification"/>
    <property type="evidence" value="ECO:0000315"/>
    <property type="project" value="ZFIN"/>
</dbReference>
<dbReference type="GO" id="GO:0034672">
    <property type="term" value="P:anterior/posterior pattern specification involved in pronephros development"/>
    <property type="evidence" value="ECO:0000316"/>
    <property type="project" value="ZFIN"/>
</dbReference>
<dbReference type="GO" id="GO:0048546">
    <property type="term" value="P:digestive tract morphogenesis"/>
    <property type="evidence" value="ECO:0000315"/>
    <property type="project" value="ZFIN"/>
</dbReference>
<dbReference type="GO" id="GO:0048566">
    <property type="term" value="P:embryonic digestive tract development"/>
    <property type="evidence" value="ECO:0000315"/>
    <property type="project" value="ZFIN"/>
</dbReference>
<dbReference type="GO" id="GO:0031018">
    <property type="term" value="P:endocrine pancreas development"/>
    <property type="evidence" value="ECO:0000315"/>
    <property type="project" value="ZFIN"/>
</dbReference>
<dbReference type="GO" id="GO:0001706">
    <property type="term" value="P:endoderm formation"/>
    <property type="evidence" value="ECO:0000314"/>
    <property type="project" value="MGI"/>
</dbReference>
<dbReference type="GO" id="GO:0042593">
    <property type="term" value="P:glucose homeostasis"/>
    <property type="evidence" value="ECO:0000315"/>
    <property type="project" value="ZFIN"/>
</dbReference>
<dbReference type="GO" id="GO:0061008">
    <property type="term" value="P:hepaticobiliary system development"/>
    <property type="evidence" value="ECO:0000316"/>
    <property type="project" value="ZFIN"/>
</dbReference>
<dbReference type="GO" id="GO:0030902">
    <property type="term" value="P:hindbrain development"/>
    <property type="evidence" value="ECO:0000315"/>
    <property type="project" value="UniProtKB"/>
</dbReference>
<dbReference type="GO" id="GO:0021575">
    <property type="term" value="P:hindbrain morphogenesis"/>
    <property type="evidence" value="ECO:0000315"/>
    <property type="project" value="ZFIN"/>
</dbReference>
<dbReference type="GO" id="GO:0030073">
    <property type="term" value="P:insulin secretion"/>
    <property type="evidence" value="ECO:0007669"/>
    <property type="project" value="InterPro"/>
</dbReference>
<dbReference type="GO" id="GO:0035622">
    <property type="term" value="P:intrahepatic bile duct development"/>
    <property type="evidence" value="ECO:0000316"/>
    <property type="project" value="ZFIN"/>
</dbReference>
<dbReference type="GO" id="GO:0001889">
    <property type="term" value="P:liver development"/>
    <property type="evidence" value="ECO:0000315"/>
    <property type="project" value="ZFIN"/>
</dbReference>
<dbReference type="GO" id="GO:0072576">
    <property type="term" value="P:liver morphogenesis"/>
    <property type="evidence" value="ECO:0000315"/>
    <property type="project" value="ZFIN"/>
</dbReference>
<dbReference type="GO" id="GO:0043049">
    <property type="term" value="P:otic placode formation"/>
    <property type="evidence" value="ECO:0000315"/>
    <property type="project" value="ZFIN"/>
</dbReference>
<dbReference type="GO" id="GO:0030916">
    <property type="term" value="P:otic vesicle formation"/>
    <property type="evidence" value="ECO:0000315"/>
    <property type="project" value="ZFIN"/>
</dbReference>
<dbReference type="GO" id="GO:0048840">
    <property type="term" value="P:otolith development"/>
    <property type="evidence" value="ECO:0000316"/>
    <property type="project" value="ZFIN"/>
</dbReference>
<dbReference type="GO" id="GO:0032474">
    <property type="term" value="P:otolith morphogenesis"/>
    <property type="evidence" value="ECO:0000315"/>
    <property type="project" value="ZFIN"/>
</dbReference>
<dbReference type="GO" id="GO:0031016">
    <property type="term" value="P:pancreas development"/>
    <property type="evidence" value="ECO:0000315"/>
    <property type="project" value="ZFIN"/>
</dbReference>
<dbReference type="GO" id="GO:1990798">
    <property type="term" value="P:pancreas regeneration"/>
    <property type="evidence" value="ECO:0000315"/>
    <property type="project" value="ZFIN"/>
</dbReference>
<dbReference type="GO" id="GO:0045893">
    <property type="term" value="P:positive regulation of DNA-templated transcription"/>
    <property type="evidence" value="ECO:0007669"/>
    <property type="project" value="InterPro"/>
</dbReference>
<dbReference type="GO" id="GO:0006357">
    <property type="term" value="P:regulation of transcription by RNA polymerase II"/>
    <property type="evidence" value="ECO:0000318"/>
    <property type="project" value="GO_Central"/>
</dbReference>
<dbReference type="GO" id="GO:0021571">
    <property type="term" value="P:rhombomere 5 development"/>
    <property type="evidence" value="ECO:0000315"/>
    <property type="project" value="ZFIN"/>
</dbReference>
<dbReference type="GO" id="GO:0021664">
    <property type="term" value="P:rhombomere 5 morphogenesis"/>
    <property type="evidence" value="ECO:0000315"/>
    <property type="project" value="ZFIN"/>
</dbReference>
<dbReference type="GO" id="GO:0021572">
    <property type="term" value="P:rhombomere 6 development"/>
    <property type="evidence" value="ECO:0000315"/>
    <property type="project" value="ZFIN"/>
</dbReference>
<dbReference type="GO" id="GO:0021667">
    <property type="term" value="P:rhombomere 6 morphogenesis"/>
    <property type="evidence" value="ECO:0000315"/>
    <property type="project" value="ZFIN"/>
</dbReference>
<dbReference type="GO" id="GO:0048752">
    <property type="term" value="P:semicircular canal morphogenesis"/>
    <property type="evidence" value="ECO:0000315"/>
    <property type="project" value="ZFIN"/>
</dbReference>
<dbReference type="GO" id="GO:0035148">
    <property type="term" value="P:tube formation"/>
    <property type="evidence" value="ECO:0000315"/>
    <property type="project" value="ZFIN"/>
</dbReference>
<dbReference type="GO" id="GO:0003323">
    <property type="term" value="P:type B pancreatic cell development"/>
    <property type="evidence" value="ECO:0000315"/>
    <property type="project" value="ZFIN"/>
</dbReference>
<dbReference type="CDD" id="cd00086">
    <property type="entry name" value="homeodomain"/>
    <property type="match status" value="1"/>
</dbReference>
<dbReference type="FunFam" id="1.10.10.60:FF:000043">
    <property type="entry name" value="Hepatocyte nuclear factor 1-beta"/>
    <property type="match status" value="1"/>
</dbReference>
<dbReference type="FunFam" id="1.10.260.40:FF:000009">
    <property type="entry name" value="Hepatocyte nuclear factor 1-beta"/>
    <property type="match status" value="1"/>
</dbReference>
<dbReference type="Gene3D" id="1.10.10.60">
    <property type="entry name" value="Homeodomain-like"/>
    <property type="match status" value="1"/>
</dbReference>
<dbReference type="Gene3D" id="1.10.260.40">
    <property type="entry name" value="lambda repressor-like DNA-binding domains"/>
    <property type="match status" value="1"/>
</dbReference>
<dbReference type="InterPro" id="IPR001356">
    <property type="entry name" value="HD"/>
</dbReference>
<dbReference type="InterPro" id="IPR039066">
    <property type="entry name" value="HNF-1"/>
</dbReference>
<dbReference type="InterPro" id="IPR006899">
    <property type="entry name" value="HNF-1_N"/>
</dbReference>
<dbReference type="InterPro" id="IPR044869">
    <property type="entry name" value="HNF-1_POU"/>
</dbReference>
<dbReference type="InterPro" id="IPR023219">
    <property type="entry name" value="HNF1_dimer_N_dom_sf"/>
</dbReference>
<dbReference type="InterPro" id="IPR006897">
    <property type="entry name" value="HNF1b_C"/>
</dbReference>
<dbReference type="InterPro" id="IPR044866">
    <property type="entry name" value="HNF_P1"/>
</dbReference>
<dbReference type="InterPro" id="IPR009057">
    <property type="entry name" value="Homeodomain-like_sf"/>
</dbReference>
<dbReference type="InterPro" id="IPR010982">
    <property type="entry name" value="Lambda_DNA-bd_dom_sf"/>
</dbReference>
<dbReference type="PANTHER" id="PTHR11568">
    <property type="entry name" value="HEPATOCYTE NUCLEAR FACTOR 1"/>
    <property type="match status" value="1"/>
</dbReference>
<dbReference type="PANTHER" id="PTHR11568:SF2">
    <property type="entry name" value="HEPATOCYTE NUCLEAR FACTOR 1-BETA"/>
    <property type="match status" value="1"/>
</dbReference>
<dbReference type="Pfam" id="PF04814">
    <property type="entry name" value="HNF-1_N"/>
    <property type="match status" value="1"/>
</dbReference>
<dbReference type="Pfam" id="PF04812">
    <property type="entry name" value="HNF-1B_C"/>
    <property type="match status" value="1"/>
</dbReference>
<dbReference type="SMART" id="SM00389">
    <property type="entry name" value="HOX"/>
    <property type="match status" value="1"/>
</dbReference>
<dbReference type="SUPFAM" id="SSF100957">
    <property type="entry name" value="Dimerization cofactor of HNF-1 alpha"/>
    <property type="match status" value="1"/>
</dbReference>
<dbReference type="SUPFAM" id="SSF46689">
    <property type="entry name" value="Homeodomain-like"/>
    <property type="match status" value="1"/>
</dbReference>
<dbReference type="SUPFAM" id="SSF47413">
    <property type="entry name" value="lambda repressor-like DNA-binding domains"/>
    <property type="match status" value="1"/>
</dbReference>
<dbReference type="PROSITE" id="PS51937">
    <property type="entry name" value="HNF_P1"/>
    <property type="match status" value="1"/>
</dbReference>
<dbReference type="PROSITE" id="PS00027">
    <property type="entry name" value="HOMEOBOX_1"/>
    <property type="match status" value="1"/>
</dbReference>
<dbReference type="PROSITE" id="PS50071">
    <property type="entry name" value="HOMEOBOX_2"/>
    <property type="match status" value="1"/>
</dbReference>
<dbReference type="PROSITE" id="PS51936">
    <property type="entry name" value="POU_4"/>
    <property type="match status" value="1"/>
</dbReference>
<organism>
    <name type="scientific">Danio rerio</name>
    <name type="common">Zebrafish</name>
    <name type="synonym">Brachydanio rerio</name>
    <dbReference type="NCBI Taxonomy" id="7955"/>
    <lineage>
        <taxon>Eukaryota</taxon>
        <taxon>Metazoa</taxon>
        <taxon>Chordata</taxon>
        <taxon>Craniata</taxon>
        <taxon>Vertebrata</taxon>
        <taxon>Euteleostomi</taxon>
        <taxon>Actinopterygii</taxon>
        <taxon>Neopterygii</taxon>
        <taxon>Teleostei</taxon>
        <taxon>Ostariophysi</taxon>
        <taxon>Cypriniformes</taxon>
        <taxon>Danionidae</taxon>
        <taxon>Danioninae</taxon>
        <taxon>Danio</taxon>
    </lineage>
</organism>
<protein>
    <recommendedName>
        <fullName>Hepatocyte nuclear factor 1-beta-A</fullName>
        <shortName>HNF-1-beta-A</shortName>
        <shortName>HNF-1B-A</shortName>
    </recommendedName>
    <alternativeName>
        <fullName>Hepatocyte nuclear factor 1-beta-2</fullName>
        <shortName>HNF-1B-2</shortName>
    </alternativeName>
    <alternativeName>
        <fullName>Transcription factor 2</fullName>
        <shortName>TCF-2</shortName>
    </alternativeName>
    <alternativeName>
        <fullName>Variant hepatic nuclear factor 1</fullName>
        <shortName>vHNF1</shortName>
    </alternativeName>
</protein>
<sequence length="559" mass="61339">MFANMVSKLTSLQQELLSALLDSGVTKDVLLQALEDLDPSPSAFGVKLDSLQMSPSGSKLSDTDSKPVFHTLTNGHSKGKLSGDEGSEDGDDYDTPPILKELQSQNTEEAAEQRAEIERMLAEDPWRAARMIKGYMQQHNIPQREVVDVTGLNQSHLSQHLNKGTPMKTQKRAALYTWYVRKQREILRQFNQATQGSGATMLDKGNQDQVLLFFSEFSQSGQGMVQPGDDAAIEPACKKLRRNRFKWGPASQQILYQAYERQKNPSKEEREALVEECNRAECLQRGVSPSKAHGLGSNLVTEVRVYNWFANRRKEEAFRQKLAMDAYSGPAHSLNSLLSHSSPHHPQTSSSPPSKMQGVRYSQQGPGEVTSSTTINHHSSNAMSTSQSVLQQVSPGALDPSHSLLSPDAKMISVSGGGLPPVSTLTNIHASHHVHQQTPNLIMPLSGVMAIAQSLNTSQAQTVPVINSVAGSLAALQPVQFSQQLNSQHQQLMQQSSGHMSQQSFMASVSHSHMYPHKQEPPQYSHSSRFPPAMVVTDANSLSTLSSMSSSKQCPLQAW</sequence>
<keyword id="KW-0010">Activator</keyword>
<keyword id="KW-0217">Developmental protein</keyword>
<keyword id="KW-0238">DNA-binding</keyword>
<keyword id="KW-0371">Homeobox</keyword>
<keyword id="KW-0539">Nucleus</keyword>
<keyword id="KW-1185">Reference proteome</keyword>
<keyword id="KW-0804">Transcription</keyword>
<keyword id="KW-0805">Transcription regulation</keyword>
<gene>
    <name type="primary">hnf1ba</name>
    <name type="synonym">hnf1b</name>
    <name type="synonym">tcf2</name>
</gene>
<proteinExistence type="evidence at transcript level"/>
<feature type="chain" id="PRO_0000343423" description="Hepatocyte nuclear factor 1-beta-A">
    <location>
        <begin position="1"/>
        <end position="559"/>
    </location>
</feature>
<feature type="domain" description="HNF-p1" evidence="5">
    <location>
        <begin position="5"/>
        <end position="36"/>
    </location>
</feature>
<feature type="domain" description="POU-specific atypical" evidence="4">
    <location>
        <begin position="100"/>
        <end position="195"/>
    </location>
</feature>
<feature type="DNA-binding region" description="Homeobox; HNF1-type" evidence="3">
    <location>
        <begin position="240"/>
        <end position="320"/>
    </location>
</feature>
<feature type="region of interest" description="Dimerization" evidence="1">
    <location>
        <begin position="1"/>
        <end position="35"/>
    </location>
</feature>
<feature type="region of interest" description="Disordered" evidence="6">
    <location>
        <begin position="53"/>
        <end position="98"/>
    </location>
</feature>
<feature type="region of interest" description="Disordered" evidence="6">
    <location>
        <begin position="334"/>
        <end position="384"/>
    </location>
</feature>
<feature type="compositionally biased region" description="Acidic residues" evidence="6">
    <location>
        <begin position="85"/>
        <end position="94"/>
    </location>
</feature>
<feature type="compositionally biased region" description="Low complexity" evidence="6">
    <location>
        <begin position="334"/>
        <end position="354"/>
    </location>
</feature>
<feature type="compositionally biased region" description="Low complexity" evidence="6">
    <location>
        <begin position="370"/>
        <end position="381"/>
    </location>
</feature>
<feature type="sequence conflict" description="In Ref. 3; AAI29148." evidence="10" ref="3">
    <original>T</original>
    <variation>S</variation>
    <location>
        <position position="370"/>
    </location>
</feature>
<evidence type="ECO:0000250" key="1"/>
<evidence type="ECO:0000250" key="2">
    <source>
        <dbReference type="UniProtKB" id="P35680"/>
    </source>
</evidence>
<evidence type="ECO:0000255" key="3">
    <source>
        <dbReference type="PROSITE-ProRule" id="PRU00108"/>
    </source>
</evidence>
<evidence type="ECO:0000255" key="4">
    <source>
        <dbReference type="PROSITE-ProRule" id="PRU01285"/>
    </source>
</evidence>
<evidence type="ECO:0000255" key="5">
    <source>
        <dbReference type="PROSITE-ProRule" id="PRU01286"/>
    </source>
</evidence>
<evidence type="ECO:0000256" key="6">
    <source>
        <dbReference type="SAM" id="MobiDB-lite"/>
    </source>
</evidence>
<evidence type="ECO:0000269" key="7">
    <source>
    </source>
</evidence>
<evidence type="ECO:0000269" key="8">
    <source>
    </source>
</evidence>
<evidence type="ECO:0000269" key="9">
    <source>
    </source>
</evidence>
<evidence type="ECO:0000305" key="10"/>
<reference key="1">
    <citation type="journal article" date="2004" name="Gene">
        <title>Two distinct teleost hepatocyte nuclear factor 1 genes, hnf1alpha/tcf1 and hnf1beta/tcf2, abundantly expressed in liver, pancreas, gut and kidney of zebrafish.</title>
        <authorList>
            <person name="Gong H.-Y."/>
            <person name="Lin C.J.-F."/>
            <person name="Chen M.H.-C."/>
            <person name="Hu M.-C."/>
            <person name="Lin G.-H."/>
            <person name="Zhou Y."/>
            <person name="Zon L.I."/>
            <person name="Wu J.-L."/>
        </authorList>
    </citation>
    <scope>NUCLEOTIDE SEQUENCE [MRNA]</scope>
    <scope>TISSUE SPECIFICITY</scope>
    <scope>DEVELOPMENTAL STAGE</scope>
    <source>
        <tissue>Embryo</tissue>
    </source>
</reference>
<reference key="2">
    <citation type="journal article" date="2001" name="Genes Dev.">
        <title>vhnf1, the MODY5 and familial GCKD-associated gene, regulates regional specification of the zebrafish gut, pronephros, and hindbrain.</title>
        <authorList>
            <person name="Sun Z."/>
            <person name="Hopkins N."/>
        </authorList>
    </citation>
    <scope>NUCLEOTIDE SEQUENCE [MRNA]</scope>
    <scope>DEVELOPMENTAL STAGE</scope>
</reference>
<reference key="3">
    <citation type="submission" date="2006-12" db="EMBL/GenBank/DDBJ databases">
        <authorList>
            <consortium name="NIH - Zebrafish Gene Collection (ZGC) project"/>
        </authorList>
    </citation>
    <scope>NUCLEOTIDE SEQUENCE [LARGE SCALE MRNA]</scope>
    <source>
        <tissue>Embryo</tissue>
    </source>
</reference>
<reference key="4">
    <citation type="journal article" date="2008" name="Zebrafish">
        <title>hnf1b genes in zebrafish hindbrain development.</title>
        <authorList>
            <person name="Choe S.-K."/>
            <person name="Hirsch N."/>
            <person name="Zhang X."/>
            <person name="Sagerstrom C.G."/>
        </authorList>
    </citation>
    <scope>FUNCTION</scope>
    <scope>TISSUE SPECIFICITY</scope>
</reference>
<accession>A1L1N5</accession>
<accession>Q6EEZ4</accession>
<accession>Q8UW01</accession>
<accession>Q90X59</accession>